<proteinExistence type="inferred from homology"/>
<reference key="1">
    <citation type="submission" date="2009-06" db="EMBL/GenBank/DDBJ databases">
        <title>Complete sequence of chromosome of Geopacillus sp. WCH70.</title>
        <authorList>
            <consortium name="US DOE Joint Genome Institute"/>
            <person name="Lucas S."/>
            <person name="Copeland A."/>
            <person name="Lapidus A."/>
            <person name="Glavina del Rio T."/>
            <person name="Dalin E."/>
            <person name="Tice H."/>
            <person name="Bruce D."/>
            <person name="Goodwin L."/>
            <person name="Pitluck S."/>
            <person name="Chertkov O."/>
            <person name="Brettin T."/>
            <person name="Detter J.C."/>
            <person name="Han C."/>
            <person name="Larimer F."/>
            <person name="Land M."/>
            <person name="Hauser L."/>
            <person name="Kyrpides N."/>
            <person name="Mikhailova N."/>
            <person name="Brumm P."/>
            <person name="Mead D.A."/>
            <person name="Richardson P."/>
        </authorList>
    </citation>
    <scope>NUCLEOTIDE SEQUENCE [LARGE SCALE GENOMIC DNA]</scope>
    <source>
        <strain>WCH70</strain>
    </source>
</reference>
<accession>C5D3B8</accession>
<comment type="function">
    <text evidence="1">Catalyzes the formation of methylglyoxal from dihydroxyacetone phosphate.</text>
</comment>
<comment type="catalytic activity">
    <reaction evidence="1">
        <text>dihydroxyacetone phosphate = methylglyoxal + phosphate</text>
        <dbReference type="Rhea" id="RHEA:17937"/>
        <dbReference type="ChEBI" id="CHEBI:17158"/>
        <dbReference type="ChEBI" id="CHEBI:43474"/>
        <dbReference type="ChEBI" id="CHEBI:57642"/>
        <dbReference type="EC" id="4.2.3.3"/>
    </reaction>
</comment>
<comment type="similarity">
    <text evidence="1">Belongs to the methylglyoxal synthase family.</text>
</comment>
<protein>
    <recommendedName>
        <fullName evidence="1">Methylglyoxal synthase</fullName>
        <shortName evidence="1">MGS</shortName>
        <ecNumber evidence="1">4.2.3.3</ecNumber>
    </recommendedName>
</protein>
<keyword id="KW-0456">Lyase</keyword>
<evidence type="ECO:0000255" key="1">
    <source>
        <dbReference type="HAMAP-Rule" id="MF_00549"/>
    </source>
</evidence>
<name>MGSA_GEOSW</name>
<organism>
    <name type="scientific">Geobacillus sp. (strain WCH70)</name>
    <dbReference type="NCBI Taxonomy" id="471223"/>
    <lineage>
        <taxon>Bacteria</taxon>
        <taxon>Bacillati</taxon>
        <taxon>Bacillota</taxon>
        <taxon>Bacilli</taxon>
        <taxon>Bacillales</taxon>
        <taxon>Anoxybacillaceae</taxon>
        <taxon>Geobacillus</taxon>
    </lineage>
</organism>
<dbReference type="EC" id="4.2.3.3" evidence="1"/>
<dbReference type="EMBL" id="CP001638">
    <property type="protein sequence ID" value="ACS24833.1"/>
    <property type="molecule type" value="Genomic_DNA"/>
</dbReference>
<dbReference type="SMR" id="C5D3B8"/>
<dbReference type="STRING" id="471223.GWCH70_2123"/>
<dbReference type="KEGG" id="gwc:GWCH70_2123"/>
<dbReference type="eggNOG" id="COG1803">
    <property type="taxonomic scope" value="Bacteria"/>
</dbReference>
<dbReference type="HOGENOM" id="CLU_120420_1_0_9"/>
<dbReference type="OrthoDB" id="9787147at2"/>
<dbReference type="GO" id="GO:0005829">
    <property type="term" value="C:cytosol"/>
    <property type="evidence" value="ECO:0007669"/>
    <property type="project" value="TreeGrafter"/>
</dbReference>
<dbReference type="GO" id="GO:0008929">
    <property type="term" value="F:methylglyoxal synthase activity"/>
    <property type="evidence" value="ECO:0007669"/>
    <property type="project" value="UniProtKB-UniRule"/>
</dbReference>
<dbReference type="GO" id="GO:0019242">
    <property type="term" value="P:methylglyoxal biosynthetic process"/>
    <property type="evidence" value="ECO:0007669"/>
    <property type="project" value="UniProtKB-UniRule"/>
</dbReference>
<dbReference type="CDD" id="cd01422">
    <property type="entry name" value="MGS"/>
    <property type="match status" value="1"/>
</dbReference>
<dbReference type="FunFam" id="3.40.50.1380:FF:000006">
    <property type="entry name" value="Methylglyoxal synthase"/>
    <property type="match status" value="1"/>
</dbReference>
<dbReference type="Gene3D" id="3.40.50.1380">
    <property type="entry name" value="Methylglyoxal synthase-like domain"/>
    <property type="match status" value="1"/>
</dbReference>
<dbReference type="HAMAP" id="MF_00549">
    <property type="entry name" value="Methylglyoxal_synth"/>
    <property type="match status" value="1"/>
</dbReference>
<dbReference type="InterPro" id="IPR004363">
    <property type="entry name" value="Methylgl_synth"/>
</dbReference>
<dbReference type="InterPro" id="IPR018148">
    <property type="entry name" value="Methylglyoxal_synth_AS"/>
</dbReference>
<dbReference type="InterPro" id="IPR011607">
    <property type="entry name" value="MGS-like_dom"/>
</dbReference>
<dbReference type="InterPro" id="IPR036914">
    <property type="entry name" value="MGS-like_dom_sf"/>
</dbReference>
<dbReference type="NCBIfam" id="TIGR00160">
    <property type="entry name" value="MGSA"/>
    <property type="match status" value="1"/>
</dbReference>
<dbReference type="NCBIfam" id="NF003559">
    <property type="entry name" value="PRK05234.1"/>
    <property type="match status" value="1"/>
</dbReference>
<dbReference type="PANTHER" id="PTHR30492">
    <property type="entry name" value="METHYLGLYOXAL SYNTHASE"/>
    <property type="match status" value="1"/>
</dbReference>
<dbReference type="PANTHER" id="PTHR30492:SF0">
    <property type="entry name" value="METHYLGLYOXAL SYNTHASE"/>
    <property type="match status" value="1"/>
</dbReference>
<dbReference type="Pfam" id="PF02142">
    <property type="entry name" value="MGS"/>
    <property type="match status" value="1"/>
</dbReference>
<dbReference type="PIRSF" id="PIRSF006614">
    <property type="entry name" value="Methylglyox_syn"/>
    <property type="match status" value="1"/>
</dbReference>
<dbReference type="SMART" id="SM00851">
    <property type="entry name" value="MGS"/>
    <property type="match status" value="1"/>
</dbReference>
<dbReference type="SUPFAM" id="SSF52335">
    <property type="entry name" value="Methylglyoxal synthase-like"/>
    <property type="match status" value="1"/>
</dbReference>
<dbReference type="PROSITE" id="PS01335">
    <property type="entry name" value="METHYLGLYOXAL_SYNTH"/>
    <property type="match status" value="1"/>
</dbReference>
<dbReference type="PROSITE" id="PS51855">
    <property type="entry name" value="MGS"/>
    <property type="match status" value="1"/>
</dbReference>
<sequence length="140" mass="15613">MKIALIAHDKKKADMIEFVTAYQPILEQHELYATGTTGLRIQEATGLKVHRFQSGPYGGDQEIGAMIARNEMDMVIFFRDPLTAQPHEPDVSALIRLCDVYSVPLATNMGTAEILIKGLERGDFAWRNIVRGRKGEINGL</sequence>
<gene>
    <name evidence="1" type="primary">mgsA</name>
    <name type="ordered locus">GWCH70_2123</name>
</gene>
<feature type="chain" id="PRO_1000211984" description="Methylglyoxal synthase">
    <location>
        <begin position="1"/>
        <end position="140"/>
    </location>
</feature>
<feature type="domain" description="MGS-like" evidence="1">
    <location>
        <begin position="1"/>
        <end position="140"/>
    </location>
</feature>
<feature type="active site" description="Proton donor/acceptor" evidence="1">
    <location>
        <position position="60"/>
    </location>
</feature>
<feature type="binding site" evidence="1">
    <location>
        <position position="8"/>
    </location>
    <ligand>
        <name>substrate</name>
    </ligand>
</feature>
<feature type="binding site" evidence="1">
    <location>
        <position position="12"/>
    </location>
    <ligand>
        <name>substrate</name>
    </ligand>
</feature>
<feature type="binding site" evidence="1">
    <location>
        <begin position="34"/>
        <end position="37"/>
    </location>
    <ligand>
        <name>substrate</name>
    </ligand>
</feature>
<feature type="binding site" evidence="1">
    <location>
        <begin position="54"/>
        <end position="55"/>
    </location>
    <ligand>
        <name>substrate</name>
    </ligand>
</feature>
<feature type="binding site" evidence="1">
    <location>
        <position position="87"/>
    </location>
    <ligand>
        <name>substrate</name>
    </ligand>
</feature>